<sequence>MTEQKYIVALDQGTTSSRAVILDHDANIVSVSQREFTQIYPEAGWVEHDPLEIYATQSSTLVETLAKAGIRSDQIAGIGITNQRETTIVWNKETGKPVYNAIVWQCRRTADTCEKLKEAGLEEYIRENTGLVVDPYFSGTKIKWILDNVEGAREDAEAGKLLFGTVDTWLVWKMTQGRVHVTDYTNASRTMVFNINTLQWDEKLLKELDIPLSMMPEVKSSSEVYGETNIGGKGGTRIPIAGIAGDQQAALYGQMCVEQGQAKNTYGTGCFLLMNTGKEKVTSRNGLLTTLACGPRGEASYALEGAVFMGGASIQWLRDEMKLLADAKDSEYFATKVDTSNGVYVVPAFTGLGAPYWDAYARGTIVGLTRGCGSNHIIRATLESIAYQTRDVIDAMQADSGIKLSALRVDGGAVANNFLMQFQSDVLDVAVHRPKVTEVTALGAAYLAGLAVGFWNGLDELADKAVIDRSFEPHHDEEKRNQRYRGWKRAVKCAQAWAELHDEE</sequence>
<accession>Q5E0Z0</accession>
<proteinExistence type="inferred from homology"/>
<dbReference type="EC" id="2.7.1.30" evidence="1"/>
<dbReference type="EMBL" id="CP000021">
    <property type="protein sequence ID" value="AAW87306.1"/>
    <property type="molecule type" value="Genomic_DNA"/>
</dbReference>
<dbReference type="RefSeq" id="WP_011263133.1">
    <property type="nucleotide sequence ID" value="NC_006841.2"/>
</dbReference>
<dbReference type="RefSeq" id="YP_206194.1">
    <property type="nucleotide sequence ID" value="NC_006841.2"/>
</dbReference>
<dbReference type="SMR" id="Q5E0Z0"/>
<dbReference type="STRING" id="312309.VF_A0236"/>
<dbReference type="EnsemblBacteria" id="AAW87306">
    <property type="protein sequence ID" value="AAW87306"/>
    <property type="gene ID" value="VF_A0236"/>
</dbReference>
<dbReference type="GeneID" id="54165560"/>
<dbReference type="KEGG" id="vfi:VF_A0236"/>
<dbReference type="PATRIC" id="fig|312309.11.peg.2841"/>
<dbReference type="eggNOG" id="COG0554">
    <property type="taxonomic scope" value="Bacteria"/>
</dbReference>
<dbReference type="HOGENOM" id="CLU_009281_2_3_6"/>
<dbReference type="OrthoDB" id="9805576at2"/>
<dbReference type="UniPathway" id="UPA00618">
    <property type="reaction ID" value="UER00672"/>
</dbReference>
<dbReference type="Proteomes" id="UP000000537">
    <property type="component" value="Chromosome II"/>
</dbReference>
<dbReference type="GO" id="GO:0005829">
    <property type="term" value="C:cytosol"/>
    <property type="evidence" value="ECO:0007669"/>
    <property type="project" value="TreeGrafter"/>
</dbReference>
<dbReference type="GO" id="GO:0005524">
    <property type="term" value="F:ATP binding"/>
    <property type="evidence" value="ECO:0007669"/>
    <property type="project" value="UniProtKB-UniRule"/>
</dbReference>
<dbReference type="GO" id="GO:0004370">
    <property type="term" value="F:glycerol kinase activity"/>
    <property type="evidence" value="ECO:0000250"/>
    <property type="project" value="UniProtKB"/>
</dbReference>
<dbReference type="GO" id="GO:0019563">
    <property type="term" value="P:glycerol catabolic process"/>
    <property type="evidence" value="ECO:0007669"/>
    <property type="project" value="UniProtKB-UniRule"/>
</dbReference>
<dbReference type="GO" id="GO:0006071">
    <property type="term" value="P:glycerol metabolic process"/>
    <property type="evidence" value="ECO:0000250"/>
    <property type="project" value="UniProtKB"/>
</dbReference>
<dbReference type="GO" id="GO:0006072">
    <property type="term" value="P:glycerol-3-phosphate metabolic process"/>
    <property type="evidence" value="ECO:0007669"/>
    <property type="project" value="InterPro"/>
</dbReference>
<dbReference type="CDD" id="cd07769">
    <property type="entry name" value="ASKHA_NBD_FGGY_GK"/>
    <property type="match status" value="1"/>
</dbReference>
<dbReference type="FunFam" id="3.30.420.40:FF:000007">
    <property type="entry name" value="Glycerol kinase"/>
    <property type="match status" value="1"/>
</dbReference>
<dbReference type="FunFam" id="3.30.420.40:FF:000008">
    <property type="entry name" value="Glycerol kinase"/>
    <property type="match status" value="1"/>
</dbReference>
<dbReference type="Gene3D" id="3.30.420.40">
    <property type="match status" value="2"/>
</dbReference>
<dbReference type="HAMAP" id="MF_00186">
    <property type="entry name" value="Glycerol_kin"/>
    <property type="match status" value="1"/>
</dbReference>
<dbReference type="InterPro" id="IPR043129">
    <property type="entry name" value="ATPase_NBD"/>
</dbReference>
<dbReference type="InterPro" id="IPR000577">
    <property type="entry name" value="Carb_kinase_FGGY"/>
</dbReference>
<dbReference type="InterPro" id="IPR018483">
    <property type="entry name" value="Carb_kinase_FGGY_CS"/>
</dbReference>
<dbReference type="InterPro" id="IPR018485">
    <property type="entry name" value="FGGY_C"/>
</dbReference>
<dbReference type="InterPro" id="IPR018484">
    <property type="entry name" value="FGGY_N"/>
</dbReference>
<dbReference type="InterPro" id="IPR005999">
    <property type="entry name" value="Glycerol_kin"/>
</dbReference>
<dbReference type="NCBIfam" id="TIGR01311">
    <property type="entry name" value="glycerol_kin"/>
    <property type="match status" value="1"/>
</dbReference>
<dbReference type="NCBIfam" id="NF000756">
    <property type="entry name" value="PRK00047.1"/>
    <property type="match status" value="1"/>
</dbReference>
<dbReference type="PANTHER" id="PTHR10196:SF69">
    <property type="entry name" value="GLYCEROL KINASE"/>
    <property type="match status" value="1"/>
</dbReference>
<dbReference type="PANTHER" id="PTHR10196">
    <property type="entry name" value="SUGAR KINASE"/>
    <property type="match status" value="1"/>
</dbReference>
<dbReference type="Pfam" id="PF02782">
    <property type="entry name" value="FGGY_C"/>
    <property type="match status" value="1"/>
</dbReference>
<dbReference type="Pfam" id="PF00370">
    <property type="entry name" value="FGGY_N"/>
    <property type="match status" value="1"/>
</dbReference>
<dbReference type="PIRSF" id="PIRSF000538">
    <property type="entry name" value="GlpK"/>
    <property type="match status" value="1"/>
</dbReference>
<dbReference type="SUPFAM" id="SSF53067">
    <property type="entry name" value="Actin-like ATPase domain"/>
    <property type="match status" value="2"/>
</dbReference>
<dbReference type="PROSITE" id="PS00933">
    <property type="entry name" value="FGGY_KINASES_1"/>
    <property type="match status" value="1"/>
</dbReference>
<dbReference type="PROSITE" id="PS00445">
    <property type="entry name" value="FGGY_KINASES_2"/>
    <property type="match status" value="1"/>
</dbReference>
<keyword id="KW-0067">ATP-binding</keyword>
<keyword id="KW-0319">Glycerol metabolism</keyword>
<keyword id="KW-0418">Kinase</keyword>
<keyword id="KW-0547">Nucleotide-binding</keyword>
<keyword id="KW-1185">Reference proteome</keyword>
<keyword id="KW-0808">Transferase</keyword>
<protein>
    <recommendedName>
        <fullName evidence="1">Glycerol kinase</fullName>
        <ecNumber evidence="1">2.7.1.30</ecNumber>
    </recommendedName>
    <alternativeName>
        <fullName evidence="1">ATP:glycerol 3-phosphotransferase</fullName>
    </alternativeName>
    <alternativeName>
        <fullName evidence="1">Glycerokinase</fullName>
        <shortName evidence="1">GK</shortName>
    </alternativeName>
</protein>
<comment type="function">
    <text evidence="1">Key enzyme in the regulation of glycerol uptake and metabolism. Catalyzes the phosphorylation of glycerol to yield sn-glycerol 3-phosphate.</text>
</comment>
<comment type="catalytic activity">
    <reaction evidence="1">
        <text>glycerol + ATP = sn-glycerol 3-phosphate + ADP + H(+)</text>
        <dbReference type="Rhea" id="RHEA:21644"/>
        <dbReference type="ChEBI" id="CHEBI:15378"/>
        <dbReference type="ChEBI" id="CHEBI:17754"/>
        <dbReference type="ChEBI" id="CHEBI:30616"/>
        <dbReference type="ChEBI" id="CHEBI:57597"/>
        <dbReference type="ChEBI" id="CHEBI:456216"/>
        <dbReference type="EC" id="2.7.1.30"/>
    </reaction>
</comment>
<comment type="activity regulation">
    <text evidence="1">Inhibited by fructose 1,6-bisphosphate (FBP).</text>
</comment>
<comment type="pathway">
    <text evidence="1">Polyol metabolism; glycerol degradation via glycerol kinase pathway; sn-glycerol 3-phosphate from glycerol: step 1/1.</text>
</comment>
<comment type="similarity">
    <text evidence="1">Belongs to the FGGY kinase family.</text>
</comment>
<name>GLPK_ALIF1</name>
<reference key="1">
    <citation type="journal article" date="2005" name="Proc. Natl. Acad. Sci. U.S.A.">
        <title>Complete genome sequence of Vibrio fischeri: a symbiotic bacterium with pathogenic congeners.</title>
        <authorList>
            <person name="Ruby E.G."/>
            <person name="Urbanowski M."/>
            <person name="Campbell J."/>
            <person name="Dunn A."/>
            <person name="Faini M."/>
            <person name="Gunsalus R."/>
            <person name="Lostroh P."/>
            <person name="Lupp C."/>
            <person name="McCann J."/>
            <person name="Millikan D."/>
            <person name="Schaefer A."/>
            <person name="Stabb E."/>
            <person name="Stevens A."/>
            <person name="Visick K."/>
            <person name="Whistler C."/>
            <person name="Greenberg E.P."/>
        </authorList>
    </citation>
    <scope>NUCLEOTIDE SEQUENCE [LARGE SCALE GENOMIC DNA]</scope>
    <source>
        <strain>ATCC 700601 / ES114</strain>
    </source>
</reference>
<gene>
    <name evidence="1" type="primary">glpK</name>
    <name type="ordered locus">VF_A0236</name>
</gene>
<evidence type="ECO:0000255" key="1">
    <source>
        <dbReference type="HAMAP-Rule" id="MF_00186"/>
    </source>
</evidence>
<feature type="chain" id="PRO_1000020809" description="Glycerol kinase">
    <location>
        <begin position="1"/>
        <end position="504"/>
    </location>
</feature>
<feature type="binding site" evidence="1">
    <location>
        <position position="14"/>
    </location>
    <ligand>
        <name>ADP</name>
        <dbReference type="ChEBI" id="CHEBI:456216"/>
    </ligand>
</feature>
<feature type="binding site" evidence="1">
    <location>
        <position position="14"/>
    </location>
    <ligand>
        <name>ATP</name>
        <dbReference type="ChEBI" id="CHEBI:30616"/>
    </ligand>
</feature>
<feature type="binding site" evidence="1">
    <location>
        <position position="14"/>
    </location>
    <ligand>
        <name>sn-glycerol 3-phosphate</name>
        <dbReference type="ChEBI" id="CHEBI:57597"/>
    </ligand>
</feature>
<feature type="binding site" evidence="1">
    <location>
        <position position="15"/>
    </location>
    <ligand>
        <name>ATP</name>
        <dbReference type="ChEBI" id="CHEBI:30616"/>
    </ligand>
</feature>
<feature type="binding site" evidence="1">
    <location>
        <position position="16"/>
    </location>
    <ligand>
        <name>ATP</name>
        <dbReference type="ChEBI" id="CHEBI:30616"/>
    </ligand>
</feature>
<feature type="binding site" evidence="1">
    <location>
        <position position="18"/>
    </location>
    <ligand>
        <name>ADP</name>
        <dbReference type="ChEBI" id="CHEBI:456216"/>
    </ligand>
</feature>
<feature type="binding site" evidence="1">
    <location>
        <position position="84"/>
    </location>
    <ligand>
        <name>glycerol</name>
        <dbReference type="ChEBI" id="CHEBI:17754"/>
    </ligand>
</feature>
<feature type="binding site" evidence="1">
    <location>
        <position position="84"/>
    </location>
    <ligand>
        <name>sn-glycerol 3-phosphate</name>
        <dbReference type="ChEBI" id="CHEBI:57597"/>
    </ligand>
</feature>
<feature type="binding site" evidence="1">
    <location>
        <position position="85"/>
    </location>
    <ligand>
        <name>glycerol</name>
        <dbReference type="ChEBI" id="CHEBI:17754"/>
    </ligand>
</feature>
<feature type="binding site" evidence="1">
    <location>
        <position position="85"/>
    </location>
    <ligand>
        <name>sn-glycerol 3-phosphate</name>
        <dbReference type="ChEBI" id="CHEBI:57597"/>
    </ligand>
</feature>
<feature type="binding site" evidence="1">
    <location>
        <position position="136"/>
    </location>
    <ligand>
        <name>glycerol</name>
        <dbReference type="ChEBI" id="CHEBI:17754"/>
    </ligand>
</feature>
<feature type="binding site" evidence="1">
    <location>
        <position position="136"/>
    </location>
    <ligand>
        <name>sn-glycerol 3-phosphate</name>
        <dbReference type="ChEBI" id="CHEBI:57597"/>
    </ligand>
</feature>
<feature type="binding site" evidence="1">
    <location>
        <position position="246"/>
    </location>
    <ligand>
        <name>glycerol</name>
        <dbReference type="ChEBI" id="CHEBI:17754"/>
    </ligand>
</feature>
<feature type="binding site" evidence="1">
    <location>
        <position position="246"/>
    </location>
    <ligand>
        <name>sn-glycerol 3-phosphate</name>
        <dbReference type="ChEBI" id="CHEBI:57597"/>
    </ligand>
</feature>
<feature type="binding site" evidence="1">
    <location>
        <position position="247"/>
    </location>
    <ligand>
        <name>glycerol</name>
        <dbReference type="ChEBI" id="CHEBI:17754"/>
    </ligand>
</feature>
<feature type="binding site" evidence="1">
    <location>
        <position position="268"/>
    </location>
    <ligand>
        <name>ADP</name>
        <dbReference type="ChEBI" id="CHEBI:456216"/>
    </ligand>
</feature>
<feature type="binding site" evidence="1">
    <location>
        <position position="268"/>
    </location>
    <ligand>
        <name>ATP</name>
        <dbReference type="ChEBI" id="CHEBI:30616"/>
    </ligand>
</feature>
<feature type="binding site" evidence="1">
    <location>
        <position position="311"/>
    </location>
    <ligand>
        <name>ADP</name>
        <dbReference type="ChEBI" id="CHEBI:456216"/>
    </ligand>
</feature>
<feature type="binding site" evidence="1">
    <location>
        <position position="311"/>
    </location>
    <ligand>
        <name>ATP</name>
        <dbReference type="ChEBI" id="CHEBI:30616"/>
    </ligand>
</feature>
<feature type="binding site" evidence="1">
    <location>
        <position position="315"/>
    </location>
    <ligand>
        <name>ATP</name>
        <dbReference type="ChEBI" id="CHEBI:30616"/>
    </ligand>
</feature>
<feature type="binding site" evidence="1">
    <location>
        <position position="412"/>
    </location>
    <ligand>
        <name>ADP</name>
        <dbReference type="ChEBI" id="CHEBI:456216"/>
    </ligand>
</feature>
<feature type="binding site" evidence="1">
    <location>
        <position position="412"/>
    </location>
    <ligand>
        <name>ATP</name>
        <dbReference type="ChEBI" id="CHEBI:30616"/>
    </ligand>
</feature>
<feature type="binding site" evidence="1">
    <location>
        <position position="416"/>
    </location>
    <ligand>
        <name>ADP</name>
        <dbReference type="ChEBI" id="CHEBI:456216"/>
    </ligand>
</feature>
<organism>
    <name type="scientific">Aliivibrio fischeri (strain ATCC 700601 / ES114)</name>
    <name type="common">Vibrio fischeri</name>
    <dbReference type="NCBI Taxonomy" id="312309"/>
    <lineage>
        <taxon>Bacteria</taxon>
        <taxon>Pseudomonadati</taxon>
        <taxon>Pseudomonadota</taxon>
        <taxon>Gammaproteobacteria</taxon>
        <taxon>Vibrionales</taxon>
        <taxon>Vibrionaceae</taxon>
        <taxon>Aliivibrio</taxon>
    </lineage>
</organism>